<feature type="chain" id="PRO_0000232198" description="ATP-dependent RNA helicase DBP4">
    <location>
        <begin position="1"/>
        <end position="766"/>
    </location>
</feature>
<feature type="domain" description="Helicase ATP-binding" evidence="2">
    <location>
        <begin position="77"/>
        <end position="251"/>
    </location>
</feature>
<feature type="domain" description="Helicase C-terminal" evidence="3">
    <location>
        <begin position="265"/>
        <end position="437"/>
    </location>
</feature>
<feature type="region of interest" description="Disordered" evidence="4">
    <location>
        <begin position="1"/>
        <end position="25"/>
    </location>
</feature>
<feature type="region of interest" description="Disordered" evidence="4">
    <location>
        <begin position="488"/>
        <end position="525"/>
    </location>
</feature>
<feature type="region of interest" description="Disordered" evidence="4">
    <location>
        <begin position="572"/>
        <end position="614"/>
    </location>
</feature>
<feature type="region of interest" description="Disordered" evidence="4">
    <location>
        <begin position="649"/>
        <end position="752"/>
    </location>
</feature>
<feature type="short sequence motif" description="Q motif">
    <location>
        <begin position="46"/>
        <end position="74"/>
    </location>
</feature>
<feature type="short sequence motif" description="DEAD box">
    <location>
        <begin position="199"/>
        <end position="202"/>
    </location>
</feature>
<feature type="compositionally biased region" description="Basic residues" evidence="4">
    <location>
        <begin position="1"/>
        <end position="18"/>
    </location>
</feature>
<feature type="compositionally biased region" description="Basic and acidic residues" evidence="4">
    <location>
        <begin position="493"/>
        <end position="502"/>
    </location>
</feature>
<feature type="compositionally biased region" description="Basic and acidic residues" evidence="4">
    <location>
        <begin position="572"/>
        <end position="581"/>
    </location>
</feature>
<feature type="compositionally biased region" description="Basic and acidic residues" evidence="4">
    <location>
        <begin position="660"/>
        <end position="671"/>
    </location>
</feature>
<feature type="compositionally biased region" description="Basic and acidic residues" evidence="4">
    <location>
        <begin position="678"/>
        <end position="687"/>
    </location>
</feature>
<feature type="compositionally biased region" description="Basic and acidic residues" evidence="4">
    <location>
        <begin position="709"/>
        <end position="738"/>
    </location>
</feature>
<feature type="compositionally biased region" description="Acidic residues" evidence="4">
    <location>
        <begin position="739"/>
        <end position="752"/>
    </location>
</feature>
<feature type="binding site" evidence="2">
    <location>
        <begin position="90"/>
        <end position="97"/>
    </location>
    <ligand>
        <name>ATP</name>
        <dbReference type="ChEBI" id="CHEBI:30616"/>
    </ligand>
</feature>
<organism>
    <name type="scientific">Debaryomyces hansenii (strain ATCC 36239 / CBS 767 / BCRC 21394 / JCM 1990 / NBRC 0083 / IGC 2968)</name>
    <name type="common">Yeast</name>
    <name type="synonym">Torulaspora hansenii</name>
    <dbReference type="NCBI Taxonomy" id="284592"/>
    <lineage>
        <taxon>Eukaryota</taxon>
        <taxon>Fungi</taxon>
        <taxon>Dikarya</taxon>
        <taxon>Ascomycota</taxon>
        <taxon>Saccharomycotina</taxon>
        <taxon>Pichiomycetes</taxon>
        <taxon>Debaryomycetaceae</taxon>
        <taxon>Debaryomyces</taxon>
    </lineage>
</organism>
<dbReference type="EC" id="3.6.4.13"/>
<dbReference type="EMBL" id="CR382134">
    <property type="protein sequence ID" value="CAG85100.2"/>
    <property type="molecule type" value="Genomic_DNA"/>
</dbReference>
<dbReference type="RefSeq" id="XP_457109.2">
    <property type="nucleotide sequence ID" value="XM_457109.1"/>
</dbReference>
<dbReference type="SMR" id="Q6BXG0"/>
<dbReference type="FunCoup" id="Q6BXG0">
    <property type="interactions" value="1123"/>
</dbReference>
<dbReference type="STRING" id="284592.Q6BXG0"/>
<dbReference type="GeneID" id="2913044"/>
<dbReference type="KEGG" id="dha:DEHA2B03322g"/>
<dbReference type="VEuPathDB" id="FungiDB:DEHA2B03322g"/>
<dbReference type="eggNOG" id="KOG0343">
    <property type="taxonomic scope" value="Eukaryota"/>
</dbReference>
<dbReference type="HOGENOM" id="CLU_003041_26_1_1"/>
<dbReference type="InParanoid" id="Q6BXG0"/>
<dbReference type="OMA" id="YDKMFER"/>
<dbReference type="OrthoDB" id="10259640at2759"/>
<dbReference type="Proteomes" id="UP000000599">
    <property type="component" value="Chromosome B"/>
</dbReference>
<dbReference type="GO" id="GO:0005730">
    <property type="term" value="C:nucleolus"/>
    <property type="evidence" value="ECO:0007669"/>
    <property type="project" value="UniProtKB-SubCell"/>
</dbReference>
<dbReference type="GO" id="GO:0032040">
    <property type="term" value="C:small-subunit processome"/>
    <property type="evidence" value="ECO:0007669"/>
    <property type="project" value="EnsemblFungi"/>
</dbReference>
<dbReference type="GO" id="GO:0005524">
    <property type="term" value="F:ATP binding"/>
    <property type="evidence" value="ECO:0007669"/>
    <property type="project" value="UniProtKB-KW"/>
</dbReference>
<dbReference type="GO" id="GO:0016887">
    <property type="term" value="F:ATP hydrolysis activity"/>
    <property type="evidence" value="ECO:0007669"/>
    <property type="project" value="RHEA"/>
</dbReference>
<dbReference type="GO" id="GO:0042802">
    <property type="term" value="F:identical protein binding"/>
    <property type="evidence" value="ECO:0007669"/>
    <property type="project" value="EnsemblFungi"/>
</dbReference>
<dbReference type="GO" id="GO:0003723">
    <property type="term" value="F:RNA binding"/>
    <property type="evidence" value="ECO:0007669"/>
    <property type="project" value="UniProtKB-KW"/>
</dbReference>
<dbReference type="GO" id="GO:0003724">
    <property type="term" value="F:RNA helicase activity"/>
    <property type="evidence" value="ECO:0007669"/>
    <property type="project" value="UniProtKB-EC"/>
</dbReference>
<dbReference type="GO" id="GO:0006364">
    <property type="term" value="P:rRNA processing"/>
    <property type="evidence" value="ECO:0007669"/>
    <property type="project" value="UniProtKB-KW"/>
</dbReference>
<dbReference type="CDD" id="cd17941">
    <property type="entry name" value="DEADc_DDX10"/>
    <property type="match status" value="1"/>
</dbReference>
<dbReference type="CDD" id="cd18787">
    <property type="entry name" value="SF2_C_DEAD"/>
    <property type="match status" value="1"/>
</dbReference>
<dbReference type="Gene3D" id="3.40.50.300">
    <property type="entry name" value="P-loop containing nucleotide triphosphate hydrolases"/>
    <property type="match status" value="2"/>
</dbReference>
<dbReference type="InterPro" id="IPR011545">
    <property type="entry name" value="DEAD/DEAH_box_helicase_dom"/>
</dbReference>
<dbReference type="InterPro" id="IPR014001">
    <property type="entry name" value="Helicase_ATP-bd"/>
</dbReference>
<dbReference type="InterPro" id="IPR001650">
    <property type="entry name" value="Helicase_C-like"/>
</dbReference>
<dbReference type="InterPro" id="IPR027417">
    <property type="entry name" value="P-loop_NTPase"/>
</dbReference>
<dbReference type="InterPro" id="IPR000629">
    <property type="entry name" value="RNA-helicase_DEAD-box_CS"/>
</dbReference>
<dbReference type="InterPro" id="IPR014014">
    <property type="entry name" value="RNA_helicase_DEAD_Q_motif"/>
</dbReference>
<dbReference type="InterPro" id="IPR025313">
    <property type="entry name" value="SPB4-like_CTE"/>
</dbReference>
<dbReference type="PANTHER" id="PTHR24031">
    <property type="entry name" value="RNA HELICASE"/>
    <property type="match status" value="1"/>
</dbReference>
<dbReference type="Pfam" id="PF13959">
    <property type="entry name" value="CTE_SPB4"/>
    <property type="match status" value="1"/>
</dbReference>
<dbReference type="Pfam" id="PF00270">
    <property type="entry name" value="DEAD"/>
    <property type="match status" value="1"/>
</dbReference>
<dbReference type="Pfam" id="PF00271">
    <property type="entry name" value="Helicase_C"/>
    <property type="match status" value="1"/>
</dbReference>
<dbReference type="SMART" id="SM00487">
    <property type="entry name" value="DEXDc"/>
    <property type="match status" value="1"/>
</dbReference>
<dbReference type="SMART" id="SM01178">
    <property type="entry name" value="DUF4217"/>
    <property type="match status" value="1"/>
</dbReference>
<dbReference type="SMART" id="SM00490">
    <property type="entry name" value="HELICc"/>
    <property type="match status" value="1"/>
</dbReference>
<dbReference type="SUPFAM" id="SSF52540">
    <property type="entry name" value="P-loop containing nucleoside triphosphate hydrolases"/>
    <property type="match status" value="2"/>
</dbReference>
<dbReference type="PROSITE" id="PS00039">
    <property type="entry name" value="DEAD_ATP_HELICASE"/>
    <property type="match status" value="1"/>
</dbReference>
<dbReference type="PROSITE" id="PS51192">
    <property type="entry name" value="HELICASE_ATP_BIND_1"/>
    <property type="match status" value="1"/>
</dbReference>
<dbReference type="PROSITE" id="PS51194">
    <property type="entry name" value="HELICASE_CTER"/>
    <property type="match status" value="1"/>
</dbReference>
<dbReference type="PROSITE" id="PS51195">
    <property type="entry name" value="Q_MOTIF"/>
    <property type="match status" value="1"/>
</dbReference>
<keyword id="KW-0067">ATP-binding</keyword>
<keyword id="KW-0347">Helicase</keyword>
<keyword id="KW-0378">Hydrolase</keyword>
<keyword id="KW-0547">Nucleotide-binding</keyword>
<keyword id="KW-0539">Nucleus</keyword>
<keyword id="KW-1185">Reference proteome</keyword>
<keyword id="KW-0690">Ribosome biogenesis</keyword>
<keyword id="KW-0694">RNA-binding</keyword>
<keyword id="KW-0698">rRNA processing</keyword>
<accession>Q6BXG0</accession>
<sequence>MGKKQNNRKVVKSQRKSHREKEEETLAKLQERIDAYDPVVDEKSISQFSDLPISEETARGLKEASFASLTDIQKKTIPISLKGEDVMGTAKTGSGKTLAFLIPTIESLIRNKITEYDGLAALIISPTRELAVQIFEVLVKIGKHNNFSAGLVTGGKDVKYEKERVSKMNILVGTPGRISQHLNESVGMETSNLQVLVLDEADRCLDMGFKKQIDNILGHLPPTRQTLLFSATQSDSVKDLARLSLANPKRVGISSDQELSATPESLEQYYIKIPLDEKLDVLWSFIKSHLKSKILVFFSSSKQVQYAYETFRTLQPGISLLKLYGRHKQTSRMETTMKFSQAQHACLFATDIVARGLDFPAIDWVVQIDCPEDAATYVHRVGRAARFGRAGKSLMMLLPSEENGMLKRLNNNKIELKFMNIKQKNKKTIRPQLQSLCFQDPMIKNLGQRAFISYFRSVYVQKDKDIFKIDELPSDKFARSLGLPGAPKIKFKGGSDNKEKKNMSRQLAALSKSNNEGDVVPEEDKKVRTKYDRMFERKNQTILSDHYLNLTGSKADTAEKSDDDDEDFMAVKRQDHELRDDELPDLSIPVSKRSAKKALSKKASVAGKGNANKLKFDDDGVAHAIYELEDEEDFKKQGDARVQKDTFLNKETELMNNADIEDKLTAKEKRQEKKRKRKEMEKNMRQESDDEDENIQTVVSIGGDDIDLDRDLEHSSADEDVPEPKKPKWFDNDKNVNKDEDDGVVEYDEPQTLEDLEALTSKLLEH</sequence>
<proteinExistence type="inferred from homology"/>
<evidence type="ECO:0000250" key="1"/>
<evidence type="ECO:0000255" key="2">
    <source>
        <dbReference type="PROSITE-ProRule" id="PRU00541"/>
    </source>
</evidence>
<evidence type="ECO:0000255" key="3">
    <source>
        <dbReference type="PROSITE-ProRule" id="PRU00542"/>
    </source>
</evidence>
<evidence type="ECO:0000256" key="4">
    <source>
        <dbReference type="SAM" id="MobiDB-lite"/>
    </source>
</evidence>
<evidence type="ECO:0000305" key="5"/>
<protein>
    <recommendedName>
        <fullName>ATP-dependent RNA helicase DBP4</fullName>
        <ecNumber>3.6.4.13</ecNumber>
    </recommendedName>
</protein>
<name>DBP4_DEBHA</name>
<reference key="1">
    <citation type="journal article" date="2004" name="Nature">
        <title>Genome evolution in yeasts.</title>
        <authorList>
            <person name="Dujon B."/>
            <person name="Sherman D."/>
            <person name="Fischer G."/>
            <person name="Durrens P."/>
            <person name="Casaregola S."/>
            <person name="Lafontaine I."/>
            <person name="de Montigny J."/>
            <person name="Marck C."/>
            <person name="Neuveglise C."/>
            <person name="Talla E."/>
            <person name="Goffard N."/>
            <person name="Frangeul L."/>
            <person name="Aigle M."/>
            <person name="Anthouard V."/>
            <person name="Babour A."/>
            <person name="Barbe V."/>
            <person name="Barnay S."/>
            <person name="Blanchin S."/>
            <person name="Beckerich J.-M."/>
            <person name="Beyne E."/>
            <person name="Bleykasten C."/>
            <person name="Boisrame A."/>
            <person name="Boyer J."/>
            <person name="Cattolico L."/>
            <person name="Confanioleri F."/>
            <person name="de Daruvar A."/>
            <person name="Despons L."/>
            <person name="Fabre E."/>
            <person name="Fairhead C."/>
            <person name="Ferry-Dumazet H."/>
            <person name="Groppi A."/>
            <person name="Hantraye F."/>
            <person name="Hennequin C."/>
            <person name="Jauniaux N."/>
            <person name="Joyet P."/>
            <person name="Kachouri R."/>
            <person name="Kerrest A."/>
            <person name="Koszul R."/>
            <person name="Lemaire M."/>
            <person name="Lesur I."/>
            <person name="Ma L."/>
            <person name="Muller H."/>
            <person name="Nicaud J.-M."/>
            <person name="Nikolski M."/>
            <person name="Oztas S."/>
            <person name="Ozier-Kalogeropoulos O."/>
            <person name="Pellenz S."/>
            <person name="Potier S."/>
            <person name="Richard G.-F."/>
            <person name="Straub M.-L."/>
            <person name="Suleau A."/>
            <person name="Swennen D."/>
            <person name="Tekaia F."/>
            <person name="Wesolowski-Louvel M."/>
            <person name="Westhof E."/>
            <person name="Wirth B."/>
            <person name="Zeniou-Meyer M."/>
            <person name="Zivanovic Y."/>
            <person name="Bolotin-Fukuhara M."/>
            <person name="Thierry A."/>
            <person name="Bouchier C."/>
            <person name="Caudron B."/>
            <person name="Scarpelli C."/>
            <person name="Gaillardin C."/>
            <person name="Weissenbach J."/>
            <person name="Wincker P."/>
            <person name="Souciet J.-L."/>
        </authorList>
    </citation>
    <scope>NUCLEOTIDE SEQUENCE [LARGE SCALE GENOMIC DNA]</scope>
    <source>
        <strain>ATCC 36239 / CBS 767 / BCRC 21394 / JCM 1990 / NBRC 0083 / IGC 2968</strain>
    </source>
</reference>
<comment type="function">
    <text evidence="1">ATP-dependent RNA helicase required for ribosome biogenesis. Involved in the release of U14 snoRNA in pre-ribosomal complexes. Required for pre-rRNA cleavage at site A2 (By similarity).</text>
</comment>
<comment type="catalytic activity">
    <reaction>
        <text>ATP + H2O = ADP + phosphate + H(+)</text>
        <dbReference type="Rhea" id="RHEA:13065"/>
        <dbReference type="ChEBI" id="CHEBI:15377"/>
        <dbReference type="ChEBI" id="CHEBI:15378"/>
        <dbReference type="ChEBI" id="CHEBI:30616"/>
        <dbReference type="ChEBI" id="CHEBI:43474"/>
        <dbReference type="ChEBI" id="CHEBI:456216"/>
        <dbReference type="EC" id="3.6.4.13"/>
    </reaction>
</comment>
<comment type="subunit">
    <text evidence="1">Interacts with the U3 and U14 snoRNAs. Associates with pre-ribosomal complexes (By similarity).</text>
</comment>
<comment type="subcellular location">
    <subcellularLocation>
        <location evidence="1">Nucleus</location>
        <location evidence="1">Nucleolus</location>
    </subcellularLocation>
</comment>
<comment type="domain">
    <text>The Q motif is unique to and characteristic of the DEAD box family of RNA helicases and controls ATP binding and hydrolysis.</text>
</comment>
<comment type="similarity">
    <text evidence="5">Belongs to the DEAD box helicase family. DDX10/DBP4 subfamily.</text>
</comment>
<gene>
    <name type="primary">DBP4</name>
    <name type="ordered locus">DEHA2B03322g</name>
</gene>